<accession>Q6R7K5</accession>
<keyword id="KW-1185">Reference proteome</keyword>
<dbReference type="EMBL" id="AY509253">
    <property type="protein sequence ID" value="AAS00910.1"/>
    <property type="molecule type" value="Genomic_DNA"/>
</dbReference>
<dbReference type="RefSeq" id="YP_024563.1">
    <property type="nucleotide sequence ID" value="NC_005881.2"/>
</dbReference>
<dbReference type="SMR" id="Q6R7K5"/>
<dbReference type="KEGG" id="vg:2948149"/>
<dbReference type="Proteomes" id="UP000007021">
    <property type="component" value="Segment"/>
</dbReference>
<reference key="1">
    <citation type="journal article" date="2005" name="J. Gen. Virol.">
        <title>A novel class of herpesvirus with bivalve hosts.</title>
        <authorList>
            <person name="Davison A.J."/>
            <person name="Trus B.L."/>
            <person name="Cheng N."/>
            <person name="Steven A.C."/>
            <person name="Watson M.S."/>
            <person name="Cunningham C."/>
            <person name="Le Deuff R.M."/>
            <person name="Renault T."/>
        </authorList>
    </citation>
    <scope>NUCLEOTIDE SEQUENCE [LARGE SCALE GENOMIC DNA]</scope>
</reference>
<name>Y018_OSHVF</name>
<organism>
    <name type="scientific">Ostreid herpesvirus 1 (isolate France)</name>
    <name type="common">OsHV-1</name>
    <name type="synonym">Pacific oyster herpesvirus</name>
    <dbReference type="NCBI Taxonomy" id="654903"/>
    <lineage>
        <taxon>Viruses</taxon>
        <taxon>Duplodnaviria</taxon>
        <taxon>Heunggongvirae</taxon>
        <taxon>Peploviricota</taxon>
        <taxon>Herviviricetes</taxon>
        <taxon>Herpesvirales</taxon>
        <taxon>Malacoherpesviridae</taxon>
        <taxon>Ostreavirus</taxon>
        <taxon>Ostreavirus ostreidmalaco1</taxon>
        <taxon>Ostreid herpesvirus 1</taxon>
    </lineage>
</organism>
<protein>
    <recommendedName>
        <fullName>Uncharacterized protein ORF18</fullName>
    </recommendedName>
</protein>
<gene>
    <name type="ORF">ORF18</name>
</gene>
<proteinExistence type="predicted"/>
<organismHost>
    <name type="scientific">Magallana gigas</name>
    <name type="common">Pacific oyster</name>
    <name type="synonym">Crassostrea gigas</name>
    <dbReference type="NCBI Taxonomy" id="29159"/>
</organismHost>
<organismHost>
    <name type="scientific">Pecten maximus</name>
    <name type="common">King scallop</name>
    <name type="synonym">Pilgrim's clam</name>
    <dbReference type="NCBI Taxonomy" id="6579"/>
</organismHost>
<sequence>MEQGKGAINTMDDILNVFNEFIAEFESYNDMVKVKSVPPPTPPKPVKKTPSPTLPKPSKQKQEPQVEVNEDRESVSNLLKKFKDSPLILCGHS</sequence>
<feature type="chain" id="PRO_0000385050" description="Uncharacterized protein ORF18">
    <location>
        <begin position="1"/>
        <end position="93"/>
    </location>
</feature>
<feature type="region of interest" description="Disordered" evidence="1">
    <location>
        <begin position="35"/>
        <end position="72"/>
    </location>
</feature>
<feature type="compositionally biased region" description="Basic and acidic residues" evidence="1">
    <location>
        <begin position="60"/>
        <end position="72"/>
    </location>
</feature>
<evidence type="ECO:0000256" key="1">
    <source>
        <dbReference type="SAM" id="MobiDB-lite"/>
    </source>
</evidence>